<gene>
    <name type="primary">MT-CYB</name>
    <name type="synonym">COB</name>
    <name type="synonym">CYTB</name>
    <name type="synonym">MTCYB</name>
</gene>
<protein>
    <recommendedName>
        <fullName>Cytochrome b</fullName>
    </recommendedName>
    <alternativeName>
        <fullName>Complex III subunit 3</fullName>
    </alternativeName>
    <alternativeName>
        <fullName>Complex III subunit III</fullName>
    </alternativeName>
    <alternativeName>
        <fullName>Cytochrome b-c1 complex subunit 3</fullName>
    </alternativeName>
    <alternativeName>
        <fullName>Ubiquinol-cytochrome-c reductase complex cytochrome b subunit</fullName>
    </alternativeName>
</protein>
<organism>
    <name type="scientific">Cerastes cerastes</name>
    <name type="common">Horned desert viper</name>
    <dbReference type="NCBI Taxonomy" id="8697"/>
    <lineage>
        <taxon>Eukaryota</taxon>
        <taxon>Metazoa</taxon>
        <taxon>Chordata</taxon>
        <taxon>Craniata</taxon>
        <taxon>Vertebrata</taxon>
        <taxon>Euteleostomi</taxon>
        <taxon>Lepidosauria</taxon>
        <taxon>Squamata</taxon>
        <taxon>Bifurcata</taxon>
        <taxon>Unidentata</taxon>
        <taxon>Episquamata</taxon>
        <taxon>Toxicofera</taxon>
        <taxon>Serpentes</taxon>
        <taxon>Colubroidea</taxon>
        <taxon>Viperidae</taxon>
        <taxon>Viperinae</taxon>
        <taxon>Cerastes</taxon>
    </lineage>
</organism>
<geneLocation type="mitochondrion"/>
<keyword id="KW-0249">Electron transport</keyword>
<keyword id="KW-0349">Heme</keyword>
<keyword id="KW-0408">Iron</keyword>
<keyword id="KW-0472">Membrane</keyword>
<keyword id="KW-0479">Metal-binding</keyword>
<keyword id="KW-0496">Mitochondrion</keyword>
<keyword id="KW-0999">Mitochondrion inner membrane</keyword>
<keyword id="KW-0679">Respiratory chain</keyword>
<keyword id="KW-0812">Transmembrane</keyword>
<keyword id="KW-1133">Transmembrane helix</keyword>
<keyword id="KW-0813">Transport</keyword>
<keyword id="KW-0830">Ubiquinone</keyword>
<sequence>LINYKNMLHQHPLKLFNLLPVGSNISTWWNFGSMLLACLMIQTVTGFFLAIHYTANINLAFSSIIHITRDVPYGWIMQNTHAIGASMFFMCIYTHIARGLYYGSYLNKEVWLSGTTLLIVLMRTAFFGYVLPWGQMSFWAATVITNLLTAIPYLGNTLTTWLWGGFSINDPTLTRFFALHFILPFIIISLSSIHIILLHNEGSSNPLGTNSDID</sequence>
<proteinExistence type="inferred from homology"/>
<comment type="function">
    <text evidence="2">Component of the ubiquinol-cytochrome c reductase complex (complex III or cytochrome b-c1 complex) that is part of the mitochondrial respiratory chain. The b-c1 complex mediates electron transfer from ubiquinol to cytochrome c. Contributes to the generation of a proton gradient across the mitochondrial membrane that is then used for ATP synthesis.</text>
</comment>
<comment type="cofactor">
    <cofactor evidence="2">
        <name>heme b</name>
        <dbReference type="ChEBI" id="CHEBI:60344"/>
    </cofactor>
    <text evidence="2">Binds 2 heme b groups non-covalently.</text>
</comment>
<comment type="subunit">
    <text evidence="2">The cytochrome bc1 complex contains 3 respiratory subunits (MT-CYB, CYC1 and UQCRFS1), 2 core proteins (UQCRC1 and UQCRC2) and probably 6 low-molecular weight proteins.</text>
</comment>
<comment type="subcellular location">
    <subcellularLocation>
        <location evidence="2">Mitochondrion inner membrane</location>
        <topology evidence="2">Multi-pass membrane protein</topology>
    </subcellularLocation>
</comment>
<comment type="miscellaneous">
    <text evidence="1">Heme 1 (or BL or b562) is low-potential and absorbs at about 562 nm, and heme 2 (or BH or b566) is high-potential and absorbs at about 566 nm.</text>
</comment>
<comment type="similarity">
    <text evidence="3">Belongs to the cytochrome b family.</text>
</comment>
<comment type="caution">
    <text evidence="2">The full-length protein contains only eight transmembrane helices, not nine as predicted by bioinformatics tools.</text>
</comment>
<name>CYB_CERCE</name>
<reference key="1">
    <citation type="journal article" date="1998" name="Mol. Phylogenet. Evol.">
        <title>Weighting and congruence: a case study based on three mitochondrial genes in pitvipers.</title>
        <authorList>
            <person name="Vidal N."/>
            <person name="Lecointre G."/>
        </authorList>
    </citation>
    <scope>NUCLEOTIDE SEQUENCE [GENOMIC DNA]</scope>
</reference>
<reference key="2">
    <citation type="journal article" date="1997" name="C. R. Acad. Sci. III, Sci. Vie">
        <title>Molecular systematics of pitvipers: paraphyly of the Bothrops complex.</title>
        <authorList>
            <person name="Vidal N."/>
            <person name="Lecointre G."/>
            <person name="Vie J.-C."/>
            <person name="Gasc J.-P."/>
        </authorList>
    </citation>
    <scope>NUCLEOTIDE SEQUENCE [GENOMIC DNA] OF 1-132</scope>
</reference>
<evidence type="ECO:0000250" key="1"/>
<evidence type="ECO:0000250" key="2">
    <source>
        <dbReference type="UniProtKB" id="P00157"/>
    </source>
</evidence>
<evidence type="ECO:0000255" key="3">
    <source>
        <dbReference type="PROSITE-ProRule" id="PRU00968"/>
    </source>
</evidence>
<feature type="chain" id="PRO_0000060757" description="Cytochrome b">
    <location>
        <begin position="1" status="less than"/>
        <end position="214" status="greater than"/>
    </location>
</feature>
<feature type="transmembrane region" description="Helical" evidence="3">
    <location>
        <begin position="31"/>
        <end position="51"/>
    </location>
</feature>
<feature type="transmembrane region" description="Helical" evidence="2">
    <location>
        <begin position="75"/>
        <end position="96"/>
    </location>
</feature>
<feature type="transmembrane region" description="Helical" evidence="2">
    <location>
        <begin position="111"/>
        <end position="131"/>
    </location>
</feature>
<feature type="transmembrane region" description="Helical" evidence="3">
    <location>
        <begin position="176"/>
        <end position="196"/>
    </location>
</feature>
<feature type="binding site" description="axial binding residue" evidence="2">
    <location>
        <position position="81"/>
    </location>
    <ligand>
        <name>heme b</name>
        <dbReference type="ChEBI" id="CHEBI:60344"/>
        <label>b562</label>
    </ligand>
    <ligandPart>
        <name>Fe</name>
        <dbReference type="ChEBI" id="CHEBI:18248"/>
    </ligandPart>
</feature>
<feature type="binding site" description="axial binding residue" evidence="2">
    <location>
        <position position="95"/>
    </location>
    <ligand>
        <name>heme b</name>
        <dbReference type="ChEBI" id="CHEBI:60344"/>
        <label>b566</label>
    </ligand>
    <ligandPart>
        <name>Fe</name>
        <dbReference type="ChEBI" id="CHEBI:18248"/>
    </ligandPart>
</feature>
<feature type="binding site" description="axial binding residue" evidence="2">
    <location>
        <position position="180"/>
    </location>
    <ligand>
        <name>heme b</name>
        <dbReference type="ChEBI" id="CHEBI:60344"/>
        <label>b562</label>
    </ligand>
    <ligandPart>
        <name>Fe</name>
        <dbReference type="ChEBI" id="CHEBI:18248"/>
    </ligandPart>
</feature>
<feature type="binding site" description="axial binding residue" evidence="2">
    <location>
        <position position="194"/>
    </location>
    <ligand>
        <name>heme b</name>
        <dbReference type="ChEBI" id="CHEBI:60344"/>
        <label>b566</label>
    </ligand>
    <ligandPart>
        <name>Fe</name>
        <dbReference type="ChEBI" id="CHEBI:18248"/>
    </ligandPart>
</feature>
<feature type="binding site" evidence="2">
    <location>
        <position position="199"/>
    </location>
    <ligand>
        <name>a ubiquinone</name>
        <dbReference type="ChEBI" id="CHEBI:16389"/>
    </ligand>
</feature>
<feature type="non-terminal residue">
    <location>
        <position position="1"/>
    </location>
</feature>
<feature type="non-terminal residue">
    <location>
        <position position="214"/>
    </location>
</feature>
<dbReference type="EMBL" id="AF039265">
    <property type="protein sequence ID" value="AAC33542.1"/>
    <property type="molecule type" value="Genomic_DNA"/>
</dbReference>
<dbReference type="SMR" id="P87419"/>
<dbReference type="GO" id="GO:0005743">
    <property type="term" value="C:mitochondrial inner membrane"/>
    <property type="evidence" value="ECO:0007669"/>
    <property type="project" value="UniProtKB-SubCell"/>
</dbReference>
<dbReference type="GO" id="GO:0046872">
    <property type="term" value="F:metal ion binding"/>
    <property type="evidence" value="ECO:0007669"/>
    <property type="project" value="UniProtKB-KW"/>
</dbReference>
<dbReference type="GO" id="GO:0008121">
    <property type="term" value="F:ubiquinol-cytochrome-c reductase activity"/>
    <property type="evidence" value="ECO:0007669"/>
    <property type="project" value="TreeGrafter"/>
</dbReference>
<dbReference type="GO" id="GO:0006122">
    <property type="term" value="P:mitochondrial electron transport, ubiquinol to cytochrome c"/>
    <property type="evidence" value="ECO:0007669"/>
    <property type="project" value="TreeGrafter"/>
</dbReference>
<dbReference type="CDD" id="cd00284">
    <property type="entry name" value="Cytochrome_b_N"/>
    <property type="match status" value="1"/>
</dbReference>
<dbReference type="Gene3D" id="1.20.810.10">
    <property type="entry name" value="Cytochrome Bc1 Complex, Chain C"/>
    <property type="match status" value="1"/>
</dbReference>
<dbReference type="InterPro" id="IPR005797">
    <property type="entry name" value="Cyt_b/b6_N"/>
</dbReference>
<dbReference type="InterPro" id="IPR027387">
    <property type="entry name" value="Cytb/b6-like_sf"/>
</dbReference>
<dbReference type="InterPro" id="IPR048259">
    <property type="entry name" value="Cytochrome_b_N_euk/bac"/>
</dbReference>
<dbReference type="InterPro" id="IPR016174">
    <property type="entry name" value="Di-haem_cyt_TM"/>
</dbReference>
<dbReference type="PANTHER" id="PTHR19271">
    <property type="entry name" value="CYTOCHROME B"/>
    <property type="match status" value="1"/>
</dbReference>
<dbReference type="PANTHER" id="PTHR19271:SF16">
    <property type="entry name" value="CYTOCHROME B"/>
    <property type="match status" value="1"/>
</dbReference>
<dbReference type="Pfam" id="PF00033">
    <property type="entry name" value="Cytochrome_B"/>
    <property type="match status" value="1"/>
</dbReference>
<dbReference type="SUPFAM" id="SSF81342">
    <property type="entry name" value="Transmembrane di-heme cytochromes"/>
    <property type="match status" value="1"/>
</dbReference>
<dbReference type="PROSITE" id="PS51002">
    <property type="entry name" value="CYTB_NTER"/>
    <property type="match status" value="1"/>
</dbReference>
<accession>P87419</accession>